<organismHost>
    <name type="scientific">Salmonella typhimurium</name>
    <dbReference type="NCBI Taxonomy" id="90371"/>
</organismHost>
<keyword id="KW-0002">3D-structure</keyword>
<keyword id="KW-0903">Direct protein sequencing</keyword>
<keyword id="KW-0426">Late protein</keyword>
<keyword id="KW-1185">Reference proteome</keyword>
<feature type="chain" id="PRO_0000077756" description="Scaffolding protein">
    <location>
        <begin position="1"/>
        <end position="303"/>
    </location>
</feature>
<feature type="region of interest" description="Post-transcriptional autoregulatory domain" evidence="2">
    <location>
        <begin position="1"/>
        <end position="74"/>
    </location>
</feature>
<feature type="region of interest" description="Interaction with the capsid protein" evidence="5">
    <location>
        <begin position="275"/>
        <end position="303"/>
    </location>
</feature>
<feature type="helix" evidence="10">
    <location>
        <begin position="272"/>
        <end position="286"/>
    </location>
</feature>
<feature type="helix" evidence="10">
    <location>
        <begin position="289"/>
        <end position="299"/>
    </location>
</feature>
<accession>P26748</accession>
<accession>A0A2H4A351</accession>
<accession>A8CGC6</accession>
<accession>Q77D92</accession>
<accession>Q7PCI6</accession>
<organism>
    <name type="scientific">Salmonella phage P22</name>
    <name type="common">Bacteriophage P22</name>
    <dbReference type="NCBI Taxonomy" id="10754"/>
    <lineage>
        <taxon>Viruses</taxon>
        <taxon>Duplodnaviria</taxon>
        <taxon>Heunggongvirae</taxon>
        <taxon>Uroviricota</taxon>
        <taxon>Caudoviricetes</taxon>
        <taxon>Lederbergvirus</taxon>
    </lineage>
</organism>
<protein>
    <recommendedName>
        <fullName>Scaffolding protein</fullName>
    </recommendedName>
    <alternativeName>
        <fullName evidence="6">Gene product 8</fullName>
        <shortName>gp8</shortName>
    </alternativeName>
</protein>
<reference key="1">
    <citation type="journal article" date="1991" name="Virology">
        <title>Nucleotide sequence of the bacteriophage P22 genes required for DNA packaging.</title>
        <authorList>
            <person name="Eppler K."/>
            <person name="Wyckoff E."/>
            <person name="Goates J."/>
            <person name="Parr R."/>
            <person name="Casjens S."/>
        </authorList>
    </citation>
    <scope>NUCLEOTIDE SEQUENCE [GENOMIC DNA]</scope>
    <scope>PROTEIN SEQUENCE OF 1-15</scope>
</reference>
<reference key="2">
    <citation type="journal article" date="2000" name="J. Bacteriol.">
        <title>Sequence of the genome of Salmonella bacteriophage P22.</title>
        <authorList>
            <person name="Vander Byl C.S."/>
            <person name="Kropinski A.M.B."/>
        </authorList>
    </citation>
    <scope>NUCLEOTIDE SEQUENCE [LARGE SCALE GENOMIC DNA]</scope>
</reference>
<reference key="3">
    <citation type="journal article" date="2003" name="J. Bacteriol.">
        <title>Corrected sequence of the bacteriophage P22 genome.</title>
        <authorList>
            <person name="Pedulla M.L."/>
            <person name="Ford M.E."/>
            <person name="Karthikeyan T."/>
            <person name="Houtz J.M."/>
            <person name="Hendrix R.W."/>
            <person name="Hatfull G.F."/>
            <person name="Poteete A.R."/>
            <person name="Gilcrease E.B."/>
            <person name="Winn-Stapley D.A."/>
            <person name="Casjens S.R."/>
        </authorList>
    </citation>
    <scope>NUCLEOTIDE SEQUENCE [LARGE SCALE GENOMIC DNA]</scope>
</reference>
<reference key="4">
    <citation type="journal article" date="2008" name="Appl. Environ. Microbiol.">
        <title>Bacteriophage P22 and Staphylococcus aureus attenuation on nonporous fomites as determined by plate assay and quantitative PCR.</title>
        <authorList>
            <person name="Masago Y."/>
            <person name="Shibata T."/>
            <person name="Rose J.B."/>
        </authorList>
    </citation>
    <scope>NUCLEOTIDE SEQUENCE [LARGE SCALE GENOMIC DNA]</scope>
    <source>
        <strain>MSU</strain>
    </source>
</reference>
<reference key="5">
    <citation type="journal article" date="1998" name="Virology">
        <title>Electrostatic interactions drive scaffolding/coat protein binding and procapsid maturation in bacteriophage P22.</title>
        <authorList>
            <person name="Parker M.H."/>
            <person name="Prevelige P.E. Jr."/>
        </authorList>
    </citation>
    <scope>INTERACTION WITH THE CAPSID PROTEIN</scope>
    <scope>SUBUNIT</scope>
    <scope>FUNCTION</scope>
</reference>
<reference key="6">
    <citation type="journal article" date="2019" name="J. Virol.">
        <title>Architect of Virus Assembly: the Portal Protein Nucleates Procapsid Assembly in Bacteriophage P22.</title>
        <authorList>
            <person name="Motwani T."/>
            <person name="Teschke C.M."/>
        </authorList>
    </citation>
    <scope>INTERACTION WITH THE PORTAL PROTEIN</scope>
</reference>
<reference evidence="7 8" key="7">
    <citation type="journal article" date="2000" name="J. Mol. Biol.">
        <title>Structure of the coat protein-binding domain of the scaffolding protein from a double-stranded DNA virus.</title>
        <authorList>
            <person name="Sun Y."/>
            <person name="Parker M.H."/>
            <person name="Weigele P."/>
            <person name="Casjens S."/>
            <person name="Prevelige P.E."/>
            <person name="Krishna N.R."/>
        </authorList>
    </citation>
    <scope>STRUCTURE BY NMR OF 264-303</scope>
    <scope>INTERACTION WITH THE CAPSID PROTEIN</scope>
</reference>
<reference evidence="9" key="8">
    <citation type="journal article" date="2023" name="Viruses">
        <title>Assembly and Capsid Expansion Mechanism of Bacteriophage P22 Revealed by High-Resolution Cryo-EM Structures.</title>
        <authorList>
            <person name="Xiao H."/>
            <person name="Zhou J."/>
            <person name="Yang F."/>
            <person name="Liu Z."/>
            <person name="Song J."/>
            <person name="Chen W."/>
            <person name="Liu H."/>
            <person name="Cheng L."/>
        </authorList>
    </citation>
    <scope>STRUCTURE BY ELECTRON MICROSCOPY (2.60 ANGSTROMS)</scope>
    <scope>INTERACTION WITH THE CAPSID PROTEIN</scope>
</reference>
<name>SCAF_BPP22</name>
<evidence type="ECO:0000269" key="1">
    <source>
    </source>
</evidence>
<evidence type="ECO:0000269" key="2">
    <source>
    </source>
</evidence>
<evidence type="ECO:0000269" key="3">
    <source>
    </source>
</evidence>
<evidence type="ECO:0000269" key="4">
    <source>
    </source>
</evidence>
<evidence type="ECO:0000269" key="5">
    <source>
    </source>
</evidence>
<evidence type="ECO:0000305" key="6"/>
<evidence type="ECO:0007744" key="7">
    <source>
        <dbReference type="PDB" id="1GP8"/>
    </source>
</evidence>
<evidence type="ECO:0007744" key="8">
    <source>
        <dbReference type="PDB" id="2GP8"/>
    </source>
</evidence>
<evidence type="ECO:0007744" key="9">
    <source>
        <dbReference type="PDB" id="8I1V"/>
    </source>
</evidence>
<evidence type="ECO:0007829" key="10">
    <source>
        <dbReference type="PDB" id="8I1V"/>
    </source>
</evidence>
<dbReference type="EMBL" id="M59749">
    <property type="protein sequence ID" value="AAA72962.1"/>
    <property type="molecule type" value="Genomic_DNA"/>
</dbReference>
<dbReference type="EMBL" id="AF217253">
    <property type="protein sequence ID" value="AAF75046.1"/>
    <property type="molecule type" value="Genomic_DNA"/>
</dbReference>
<dbReference type="EMBL" id="BK000583">
    <property type="protein sequence ID" value="DAA00986.1"/>
    <property type="molecule type" value="Genomic_DNA"/>
</dbReference>
<dbReference type="EMBL" id="AF527608">
    <property type="protein sequence ID" value="AAM81388.1"/>
    <property type="molecule type" value="Genomic_DNA"/>
</dbReference>
<dbReference type="EMBL" id="AB362338">
    <property type="protein sequence ID" value="BAF80719.1"/>
    <property type="molecule type" value="Genomic_DNA"/>
</dbReference>
<dbReference type="EMBL" id="AB426868">
    <property type="protein sequence ID" value="BAG12602.1"/>
    <property type="molecule type" value="Genomic_DNA"/>
</dbReference>
<dbReference type="PIR" id="D40474">
    <property type="entry name" value="Z8BP22"/>
</dbReference>
<dbReference type="RefSeq" id="YP_063736.1">
    <property type="nucleotide sequence ID" value="NC_002371.2"/>
</dbReference>
<dbReference type="PDB" id="1GP8">
    <property type="method" value="NMR"/>
    <property type="chains" value="A=264-303"/>
</dbReference>
<dbReference type="PDB" id="2GP8">
    <property type="method" value="NMR"/>
    <property type="chains" value="A=264-303"/>
</dbReference>
<dbReference type="PDB" id="8I1V">
    <property type="method" value="EM"/>
    <property type="resolution" value="2.60 A"/>
    <property type="chains" value="H/I/J/K/L/M/N=1-303"/>
</dbReference>
<dbReference type="PDB" id="9KYV">
    <property type="method" value="EM"/>
    <property type="resolution" value="4.90 A"/>
    <property type="chains" value="A/B=1-303"/>
</dbReference>
<dbReference type="PDB" id="9KYW">
    <property type="method" value="EM"/>
    <property type="resolution" value="6.70 A"/>
    <property type="chains" value="A=1-303"/>
</dbReference>
<dbReference type="PDB" id="9KYX">
    <property type="method" value="EM"/>
    <property type="resolution" value="6.90 A"/>
    <property type="chains" value="A/B/C/D/E/F/G/H=1-303"/>
</dbReference>
<dbReference type="PDBsum" id="1GP8"/>
<dbReference type="PDBsum" id="2GP8"/>
<dbReference type="PDBsum" id="8I1V"/>
<dbReference type="PDBsum" id="9KYV"/>
<dbReference type="PDBsum" id="9KYW"/>
<dbReference type="PDBsum" id="9KYX"/>
<dbReference type="BMRB" id="P26748"/>
<dbReference type="EMDB" id="EMD-35123"/>
<dbReference type="SMR" id="P26748"/>
<dbReference type="GeneID" id="2944242"/>
<dbReference type="KEGG" id="vg:2944242"/>
<dbReference type="OrthoDB" id="5425at10239"/>
<dbReference type="EvolutionaryTrace" id="P26748"/>
<dbReference type="Proteomes" id="UP000001315">
    <property type="component" value="Segment"/>
</dbReference>
<dbReference type="Proteomes" id="UP000001795">
    <property type="component" value="Segment"/>
</dbReference>
<dbReference type="Proteomes" id="UP000001796">
    <property type="component" value="Segment"/>
</dbReference>
<dbReference type="Proteomes" id="UP000002165">
    <property type="component" value="Segment"/>
</dbReference>
<dbReference type="Proteomes" id="UP000007960">
    <property type="component" value="Segment"/>
</dbReference>
<dbReference type="Gene3D" id="4.10.810.10">
    <property type="entry name" value="Virus Scaffolding Protein, Chain A"/>
    <property type="match status" value="1"/>
</dbReference>
<dbReference type="InterPro" id="IPR015385">
    <property type="entry name" value="Phage_P22_Gp8_scaffold"/>
</dbReference>
<dbReference type="InterPro" id="IPR027393">
    <property type="entry name" value="Virus_scaffolding_prot_C"/>
</dbReference>
<dbReference type="Pfam" id="PF09306">
    <property type="entry name" value="Phage-scaffold"/>
    <property type="match status" value="1"/>
</dbReference>
<comment type="function">
    <text evidence="5">Required for procapsid assembly (PubMed:9792844). The interior of the prohead is filled with the scaffolding protein (PubMed:9792844). The scaffolding protein is lost from the structure during packaging (PubMed:9792844). Scaffolding protein exit is followed by the expansion of the procapsid into a mature capsid (PubMed:9792844).</text>
</comment>
<comment type="subunit">
    <text evidence="1 3 4 5">Homodimer (PubMed:9792844). Homotetramer (PubMed:9792844). Interacts with the portal protein; this interaction initiates procapsid assembly, thereby ensuring incorporation of only one portal ring per capsid (PubMed:30787152, PubMed:9792844). Interacts (via C-terminus) with the capsid protein; this interaction allow to form the procapsid, in which the scaffolding protein forms an internal shell in the icosahedrally arranged capsid protein subunits (PubMed:10764583, PubMed:36851569).</text>
</comment>
<comment type="induction">
    <text>The scaffolding protein negatively regulates its own synthesis when it is not assembled into proheads.</text>
</comment>
<proteinExistence type="evidence at protein level"/>
<gene>
    <name type="primary">8</name>
</gene>
<sequence length="303" mass="33565">MEPTTEIQATEDLTLSGDHAAASADSLVVDNANDNAGQEEGFEIVLKDDETAPKQDPAKNAEFARRRIERKRQRELEQQMEAVKRGELPESLRVNPDLPPQPDINAYLSEEGLAKYDYDNSRALAAFNAANTEWLMKAQDARSNAVAEQGRKTQEFTQQSAQYVEAARKHYDAAEKLNIPDYQEKEDAFMQLVPPAVGADIMRLFPEKSAALMYHLGANPEKARQLLAMDGQSALIELTRLSERLTLKPRGKQISSAPPADQPITGDVSAANKDAIRKQMDAAASKGDVETYRKLKAKLKGIR</sequence>